<dbReference type="EMBL" id="CP000025">
    <property type="protein sequence ID" value="AAW35675.1"/>
    <property type="molecule type" value="Genomic_DNA"/>
</dbReference>
<dbReference type="RefSeq" id="WP_002825273.1">
    <property type="nucleotide sequence ID" value="NC_003912.7"/>
</dbReference>
<dbReference type="SMR" id="Q5HTP3"/>
<dbReference type="KEGG" id="cjr:CJE1355"/>
<dbReference type="HOGENOM" id="CLU_132825_2_0_7"/>
<dbReference type="GO" id="GO:0005737">
    <property type="term" value="C:cytoplasm"/>
    <property type="evidence" value="ECO:0007669"/>
    <property type="project" value="UniProtKB-SubCell"/>
</dbReference>
<dbReference type="GO" id="GO:0005524">
    <property type="term" value="F:ATP binding"/>
    <property type="evidence" value="ECO:0007669"/>
    <property type="project" value="InterPro"/>
</dbReference>
<dbReference type="GO" id="GO:0046872">
    <property type="term" value="F:metal ion binding"/>
    <property type="evidence" value="ECO:0007669"/>
    <property type="project" value="TreeGrafter"/>
</dbReference>
<dbReference type="GO" id="GO:0044183">
    <property type="term" value="F:protein folding chaperone"/>
    <property type="evidence" value="ECO:0007669"/>
    <property type="project" value="InterPro"/>
</dbReference>
<dbReference type="GO" id="GO:0051087">
    <property type="term" value="F:protein-folding chaperone binding"/>
    <property type="evidence" value="ECO:0007669"/>
    <property type="project" value="TreeGrafter"/>
</dbReference>
<dbReference type="GO" id="GO:0051082">
    <property type="term" value="F:unfolded protein binding"/>
    <property type="evidence" value="ECO:0007669"/>
    <property type="project" value="TreeGrafter"/>
</dbReference>
<dbReference type="GO" id="GO:0051085">
    <property type="term" value="P:chaperone cofactor-dependent protein refolding"/>
    <property type="evidence" value="ECO:0007669"/>
    <property type="project" value="TreeGrafter"/>
</dbReference>
<dbReference type="CDD" id="cd00320">
    <property type="entry name" value="cpn10"/>
    <property type="match status" value="1"/>
</dbReference>
<dbReference type="FunFam" id="2.30.33.40:FF:000001">
    <property type="entry name" value="10 kDa chaperonin"/>
    <property type="match status" value="1"/>
</dbReference>
<dbReference type="Gene3D" id="2.30.33.40">
    <property type="entry name" value="GroES chaperonin"/>
    <property type="match status" value="1"/>
</dbReference>
<dbReference type="HAMAP" id="MF_00580">
    <property type="entry name" value="CH10"/>
    <property type="match status" value="1"/>
</dbReference>
<dbReference type="InterPro" id="IPR020818">
    <property type="entry name" value="Chaperonin_GroES"/>
</dbReference>
<dbReference type="InterPro" id="IPR037124">
    <property type="entry name" value="Chaperonin_GroES_sf"/>
</dbReference>
<dbReference type="InterPro" id="IPR011032">
    <property type="entry name" value="GroES-like_sf"/>
</dbReference>
<dbReference type="NCBIfam" id="NF001537">
    <property type="entry name" value="PRK00364.3-3"/>
    <property type="match status" value="1"/>
</dbReference>
<dbReference type="PANTHER" id="PTHR10772">
    <property type="entry name" value="10 KDA HEAT SHOCK PROTEIN"/>
    <property type="match status" value="1"/>
</dbReference>
<dbReference type="PANTHER" id="PTHR10772:SF58">
    <property type="entry name" value="CO-CHAPERONIN GROES"/>
    <property type="match status" value="1"/>
</dbReference>
<dbReference type="Pfam" id="PF00166">
    <property type="entry name" value="Cpn10"/>
    <property type="match status" value="1"/>
</dbReference>
<dbReference type="PRINTS" id="PR00297">
    <property type="entry name" value="CHAPERONIN10"/>
</dbReference>
<dbReference type="SMART" id="SM00883">
    <property type="entry name" value="Cpn10"/>
    <property type="match status" value="1"/>
</dbReference>
<dbReference type="SUPFAM" id="SSF50129">
    <property type="entry name" value="GroES-like"/>
    <property type="match status" value="1"/>
</dbReference>
<evidence type="ECO:0000255" key="1">
    <source>
        <dbReference type="HAMAP-Rule" id="MF_00580"/>
    </source>
</evidence>
<comment type="function">
    <text evidence="1">Together with the chaperonin GroEL, plays an essential role in assisting protein folding. The GroEL-GroES system forms a nano-cage that allows encapsulation of the non-native substrate proteins and provides a physical environment optimized to promote and accelerate protein folding. GroES binds to the apical surface of the GroEL ring, thereby capping the opening of the GroEL channel.</text>
</comment>
<comment type="subunit">
    <text evidence="1">Heptamer of 7 subunits arranged in a ring. Interacts with the chaperonin GroEL.</text>
</comment>
<comment type="subcellular location">
    <subcellularLocation>
        <location evidence="1">Cytoplasm</location>
    </subcellularLocation>
</comment>
<comment type="similarity">
    <text evidence="1">Belongs to the GroES chaperonin family.</text>
</comment>
<name>CH10_CAMJR</name>
<protein>
    <recommendedName>
        <fullName evidence="1">Co-chaperonin GroES</fullName>
    </recommendedName>
    <alternativeName>
        <fullName evidence="1">10 kDa chaperonin</fullName>
    </alternativeName>
    <alternativeName>
        <fullName evidence="1">Chaperonin-10</fullName>
        <shortName evidence="1">Cpn10</shortName>
    </alternativeName>
</protein>
<feature type="chain" id="PRO_0000174725" description="Co-chaperonin GroES">
    <location>
        <begin position="1"/>
        <end position="86"/>
    </location>
</feature>
<organism>
    <name type="scientific">Campylobacter jejuni (strain RM1221)</name>
    <dbReference type="NCBI Taxonomy" id="195099"/>
    <lineage>
        <taxon>Bacteria</taxon>
        <taxon>Pseudomonadati</taxon>
        <taxon>Campylobacterota</taxon>
        <taxon>Epsilonproteobacteria</taxon>
        <taxon>Campylobacterales</taxon>
        <taxon>Campylobacteraceae</taxon>
        <taxon>Campylobacter</taxon>
    </lineage>
</organism>
<proteinExistence type="inferred from homology"/>
<keyword id="KW-0143">Chaperone</keyword>
<keyword id="KW-0963">Cytoplasm</keyword>
<sequence length="86" mass="9458">MNFQPLGKRVLVKRVEETKTTASGIIIPDNAKEKPLMGEVVAVSKEITDIANGDKIVFAKYGGTEIKLDNNEYLVLNLDDILGILK</sequence>
<gene>
    <name evidence="1" type="primary">groES</name>
    <name evidence="1" type="synonym">groS</name>
    <name type="ordered locus">CJE1355</name>
</gene>
<reference key="1">
    <citation type="journal article" date="2005" name="PLoS Biol.">
        <title>Major structural differences and novel potential virulence mechanisms from the genomes of multiple Campylobacter species.</title>
        <authorList>
            <person name="Fouts D.E."/>
            <person name="Mongodin E.F."/>
            <person name="Mandrell R.E."/>
            <person name="Miller W.G."/>
            <person name="Rasko D.A."/>
            <person name="Ravel J."/>
            <person name="Brinkac L.M."/>
            <person name="DeBoy R.T."/>
            <person name="Parker C.T."/>
            <person name="Daugherty S.C."/>
            <person name="Dodson R.J."/>
            <person name="Durkin A.S."/>
            <person name="Madupu R."/>
            <person name="Sullivan S.A."/>
            <person name="Shetty J.U."/>
            <person name="Ayodeji M.A."/>
            <person name="Shvartsbeyn A."/>
            <person name="Schatz M.C."/>
            <person name="Badger J.H."/>
            <person name="Fraser C.M."/>
            <person name="Nelson K.E."/>
        </authorList>
    </citation>
    <scope>NUCLEOTIDE SEQUENCE [LARGE SCALE GENOMIC DNA]</scope>
    <source>
        <strain>RM1221</strain>
    </source>
</reference>
<accession>Q5HTP3</accession>